<dbReference type="EMBL" id="CH981526">
    <property type="protein sequence ID" value="EDK44442.1"/>
    <property type="status" value="ALT_SEQ"/>
    <property type="molecule type" value="Genomic_DNA"/>
</dbReference>
<dbReference type="RefSeq" id="XP_001526063.1">
    <property type="nucleotide sequence ID" value="XM_001526013.1"/>
</dbReference>
<dbReference type="FunCoup" id="A5DZ34">
    <property type="interactions" value="74"/>
</dbReference>
<dbReference type="STRING" id="379508.A5DZ34"/>
<dbReference type="GeneID" id="5232914"/>
<dbReference type="KEGG" id="lel:PVL30_003469"/>
<dbReference type="eggNOG" id="ENOG502S1VT">
    <property type="taxonomic scope" value="Eukaryota"/>
</dbReference>
<dbReference type="HOGENOM" id="CLU_089705_0_0_1"/>
<dbReference type="InParanoid" id="A5DZ34"/>
<dbReference type="OrthoDB" id="29460at2759"/>
<dbReference type="Proteomes" id="UP000001996">
    <property type="component" value="Unassembled WGS sequence"/>
</dbReference>
<dbReference type="GO" id="GO:0030659">
    <property type="term" value="C:cytoplasmic vesicle membrane"/>
    <property type="evidence" value="ECO:0007669"/>
    <property type="project" value="UniProtKB-SubCell"/>
</dbReference>
<dbReference type="GO" id="GO:0000139">
    <property type="term" value="C:Golgi membrane"/>
    <property type="evidence" value="ECO:0007669"/>
    <property type="project" value="UniProtKB-SubCell"/>
</dbReference>
<dbReference type="GO" id="GO:0031966">
    <property type="term" value="C:mitochondrial membrane"/>
    <property type="evidence" value="ECO:0007669"/>
    <property type="project" value="UniProtKB-SubCell"/>
</dbReference>
<dbReference type="GO" id="GO:0034045">
    <property type="term" value="C:phagophore assembly site membrane"/>
    <property type="evidence" value="ECO:0007669"/>
    <property type="project" value="UniProtKB-SubCell"/>
</dbReference>
<dbReference type="GO" id="GO:0006914">
    <property type="term" value="P:autophagy"/>
    <property type="evidence" value="ECO:0007669"/>
    <property type="project" value="UniProtKB-KW"/>
</dbReference>
<dbReference type="GO" id="GO:0015031">
    <property type="term" value="P:protein transport"/>
    <property type="evidence" value="ECO:0007669"/>
    <property type="project" value="UniProtKB-KW"/>
</dbReference>
<dbReference type="Gene3D" id="2.70.130.10">
    <property type="entry name" value="Mannose-6-phosphate receptor binding domain"/>
    <property type="match status" value="1"/>
</dbReference>
<dbReference type="InterPro" id="IPR018939">
    <property type="entry name" value="Autophagy-rel_prot_27"/>
</dbReference>
<dbReference type="InterPro" id="IPR009011">
    <property type="entry name" value="Man6P_isomerase_rcpt-bd_dom_sf"/>
</dbReference>
<dbReference type="InterPro" id="IPR044865">
    <property type="entry name" value="MRH_dom"/>
</dbReference>
<dbReference type="PANTHER" id="PTHR15071:SF13">
    <property type="entry name" value="AUTOPHAGY-RELATED PROTEIN 27"/>
    <property type="match status" value="1"/>
</dbReference>
<dbReference type="PANTHER" id="PTHR15071">
    <property type="entry name" value="MANNOSE-6-PHOSPHATE RECEPTOR FAMILY MEMBER"/>
    <property type="match status" value="1"/>
</dbReference>
<dbReference type="Pfam" id="PF09451">
    <property type="entry name" value="ATG27"/>
    <property type="match status" value="1"/>
</dbReference>
<dbReference type="SUPFAM" id="SSF50911">
    <property type="entry name" value="Mannose 6-phosphate receptor domain"/>
    <property type="match status" value="1"/>
</dbReference>
<dbReference type="PROSITE" id="PS51914">
    <property type="entry name" value="MRH"/>
    <property type="match status" value="1"/>
</dbReference>
<reference key="1">
    <citation type="journal article" date="2009" name="Nature">
        <title>Evolution of pathogenicity and sexual reproduction in eight Candida genomes.</title>
        <authorList>
            <person name="Butler G."/>
            <person name="Rasmussen M.D."/>
            <person name="Lin M.F."/>
            <person name="Santos M.A.S."/>
            <person name="Sakthikumar S."/>
            <person name="Munro C.A."/>
            <person name="Rheinbay E."/>
            <person name="Grabherr M."/>
            <person name="Forche A."/>
            <person name="Reedy J.L."/>
            <person name="Agrafioti I."/>
            <person name="Arnaud M.B."/>
            <person name="Bates S."/>
            <person name="Brown A.J.P."/>
            <person name="Brunke S."/>
            <person name="Costanzo M.C."/>
            <person name="Fitzpatrick D.A."/>
            <person name="de Groot P.W.J."/>
            <person name="Harris D."/>
            <person name="Hoyer L.L."/>
            <person name="Hube B."/>
            <person name="Klis F.M."/>
            <person name="Kodira C."/>
            <person name="Lennard N."/>
            <person name="Logue M.E."/>
            <person name="Martin R."/>
            <person name="Neiman A.M."/>
            <person name="Nikolaou E."/>
            <person name="Quail M.A."/>
            <person name="Quinn J."/>
            <person name="Santos M.C."/>
            <person name="Schmitzberger F.F."/>
            <person name="Sherlock G."/>
            <person name="Shah P."/>
            <person name="Silverstein K.A.T."/>
            <person name="Skrzypek M.S."/>
            <person name="Soll D."/>
            <person name="Staggs R."/>
            <person name="Stansfield I."/>
            <person name="Stumpf M.P.H."/>
            <person name="Sudbery P.E."/>
            <person name="Srikantha T."/>
            <person name="Zeng Q."/>
            <person name="Berman J."/>
            <person name="Berriman M."/>
            <person name="Heitman J."/>
            <person name="Gow N.A.R."/>
            <person name="Lorenz M.C."/>
            <person name="Birren B.W."/>
            <person name="Kellis M."/>
            <person name="Cuomo C.A."/>
        </authorList>
    </citation>
    <scope>NUCLEOTIDE SEQUENCE [LARGE SCALE GENOMIC DNA]</scope>
    <source>
        <strain>ATCC 11503 / BCRC 21390 / CBS 2605 / JCM 1781 / NBRC 1676 / NRRL YB-4239</strain>
    </source>
</reference>
<sequence length="272" mass="30436">MLNRLLIFITLALAVRALDCSSKELQQYNLESVKGTYSISNIKSTPPSKTNITWSIGICEPIKDVADCPQNSDVCGITSILIDGKSPVVSEIIGFNSNVQKEYETIAEGDGGIIVKDKAVNWGDSLIDAEIHFICDKNAKENDLKLDKWDGQSVKLSFKSKAACITSDKDKKKNNGNNNDNNKNNDKKKDNGELWGWFTWIFIFLVLFLSIYYCGVRARGSSTIRETPFYFQSALKEVIENFIDLLKSLPSFIREIIERFTGSSGRAEYSAV</sequence>
<evidence type="ECO:0000250" key="1"/>
<evidence type="ECO:0000255" key="2"/>
<evidence type="ECO:0000255" key="3">
    <source>
        <dbReference type="PROSITE-ProRule" id="PRU01262"/>
    </source>
</evidence>
<evidence type="ECO:0000305" key="4"/>
<comment type="function">
    <text evidence="1">Effector of VPS34 phosphatidylinositol 3-phosphate kinase signaling. Regulates the cytoplasm to vacuole transport (Cvt) vesicle formation. Plays a role in ATG protein retrieval from the pre-autophagosomal structure (PAS) and is especially required for autophagy-dependent cycling of ATG9 (By similarity).</text>
</comment>
<comment type="subcellular location">
    <subcellularLocation>
        <location evidence="1">Cytoplasmic vesicle membrane</location>
        <topology evidence="1">Single-pass type I membrane protein</topology>
    </subcellularLocation>
    <subcellularLocation>
        <location evidence="1">Golgi apparatus membrane</location>
        <topology evidence="1">Single-pass type I membrane protein</topology>
    </subcellularLocation>
    <subcellularLocation>
        <location evidence="1">Mitochondrion membrane</location>
        <topology evidence="1">Single-pass membrane protein</topology>
    </subcellularLocation>
    <subcellularLocation>
        <location evidence="1">Preautophagosomal structure membrane</location>
        <topology evidence="1">Single-pass type I membrane protein</topology>
    </subcellularLocation>
    <text evidence="1">Cycles among the pre-autophagosomal structure (PAS), mitochondria and Golgi.</text>
</comment>
<comment type="similarity">
    <text evidence="4">Belongs to the ATG27 family.</text>
</comment>
<comment type="sequence caution" evidence="4">
    <conflict type="erroneous termination">
        <sequence resource="EMBL-CDS" id="EDK44442"/>
    </conflict>
    <text>Truncated C-terminus.</text>
</comment>
<feature type="signal peptide" evidence="2">
    <location>
        <begin position="1"/>
        <end position="17"/>
    </location>
</feature>
<feature type="chain" id="PRO_0000318051" description="Autophagy-related protein 27">
    <location>
        <begin position="18"/>
        <end position="272"/>
    </location>
</feature>
<feature type="topological domain" description="Lumenal" evidence="2">
    <location>
        <begin position="18"/>
        <end position="193"/>
    </location>
</feature>
<feature type="transmembrane region" description="Helical" evidence="2">
    <location>
        <begin position="194"/>
        <end position="214"/>
    </location>
</feature>
<feature type="topological domain" description="Cytoplasmic" evidence="2">
    <location>
        <begin position="215"/>
        <end position="272"/>
    </location>
</feature>
<feature type="domain" description="MRH" evidence="3">
    <location>
        <begin position="18"/>
        <end position="166"/>
    </location>
</feature>
<feature type="disulfide bond" evidence="3">
    <location>
        <begin position="20"/>
        <end position="59"/>
    </location>
</feature>
<feature type="disulfide bond" evidence="3">
    <location>
        <begin position="68"/>
        <end position="75"/>
    </location>
</feature>
<feature type="disulfide bond" evidence="3">
    <location>
        <begin position="135"/>
        <end position="164"/>
    </location>
</feature>
<name>ATG27_LODEL</name>
<accession>A5DZ34</accession>
<keyword id="KW-0072">Autophagy</keyword>
<keyword id="KW-0968">Cytoplasmic vesicle</keyword>
<keyword id="KW-1015">Disulfide bond</keyword>
<keyword id="KW-0333">Golgi apparatus</keyword>
<keyword id="KW-0472">Membrane</keyword>
<keyword id="KW-0496">Mitochondrion</keyword>
<keyword id="KW-0653">Protein transport</keyword>
<keyword id="KW-1185">Reference proteome</keyword>
<keyword id="KW-0732">Signal</keyword>
<keyword id="KW-0812">Transmembrane</keyword>
<keyword id="KW-1133">Transmembrane helix</keyword>
<keyword id="KW-0813">Transport</keyword>
<gene>
    <name type="primary">ATG27</name>
    <name type="ORF">LELG_02621</name>
</gene>
<proteinExistence type="inferred from homology"/>
<protein>
    <recommendedName>
        <fullName>Autophagy-related protein 27</fullName>
    </recommendedName>
</protein>
<organism>
    <name type="scientific">Lodderomyces elongisporus (strain ATCC 11503 / CBS 2605 / JCM 1781 / NBRC 1676 / NRRL YB-4239)</name>
    <name type="common">Yeast</name>
    <name type="synonym">Saccharomyces elongisporus</name>
    <dbReference type="NCBI Taxonomy" id="379508"/>
    <lineage>
        <taxon>Eukaryota</taxon>
        <taxon>Fungi</taxon>
        <taxon>Dikarya</taxon>
        <taxon>Ascomycota</taxon>
        <taxon>Saccharomycotina</taxon>
        <taxon>Pichiomycetes</taxon>
        <taxon>Debaryomycetaceae</taxon>
        <taxon>Candida/Lodderomyces clade</taxon>
        <taxon>Lodderomyces</taxon>
    </lineage>
</organism>